<accession>Q5LWT9</accession>
<gene>
    <name evidence="2" type="primary">mutM</name>
    <name evidence="2" type="synonym">fpg</name>
    <name type="ordered locus">SPO0146</name>
</gene>
<evidence type="ECO:0000250" key="1"/>
<evidence type="ECO:0000255" key="2">
    <source>
        <dbReference type="HAMAP-Rule" id="MF_00103"/>
    </source>
</evidence>
<sequence length="283" mass="31120">MPELPEVETVRRGLAPAMEGAVIARAEVNRPDLRWPFPDRMAERLTGQRVERLRRRSKYILADLSGGETLLIHLGMSGRMTVSGDPLGQFVHDHPAAQKHDHVVFHMDNGARITFNDPRRFGAMDLMATATADEHKLLMVLGPEPLGNDFHEDYLVAALKGRNTPVKSALLDQGIVAGLGNIYVCEALFRAGVSPRRKAGQIAAARVSALVPIIRQVLSEAIEAGGSSLKDFRQADGELGYFQHSFDVYGREGEPCRRAGCDGTVQRITQSGRSSFYCAQCQR</sequence>
<feature type="initiator methionine" description="Removed" evidence="1">
    <location>
        <position position="1"/>
    </location>
</feature>
<feature type="chain" id="PRO_0000228472" description="Formamidopyrimidine-DNA glycosylase">
    <location>
        <begin position="2"/>
        <end position="283"/>
    </location>
</feature>
<feature type="zinc finger region" description="FPG-type" evidence="2">
    <location>
        <begin position="247"/>
        <end position="283"/>
    </location>
</feature>
<feature type="active site" description="Schiff-base intermediate with DNA" evidence="2">
    <location>
        <position position="2"/>
    </location>
</feature>
<feature type="active site" description="Proton donor" evidence="2">
    <location>
        <position position="3"/>
    </location>
</feature>
<feature type="active site" description="Proton donor; for beta-elimination activity" evidence="2">
    <location>
        <position position="58"/>
    </location>
</feature>
<feature type="active site" description="Proton donor; for delta-elimination activity" evidence="2">
    <location>
        <position position="273"/>
    </location>
</feature>
<feature type="binding site" evidence="2">
    <location>
        <position position="100"/>
    </location>
    <ligand>
        <name>DNA</name>
        <dbReference type="ChEBI" id="CHEBI:16991"/>
    </ligand>
</feature>
<feature type="binding site" evidence="2">
    <location>
        <position position="119"/>
    </location>
    <ligand>
        <name>DNA</name>
        <dbReference type="ChEBI" id="CHEBI:16991"/>
    </ligand>
</feature>
<feature type="binding site" evidence="2">
    <location>
        <position position="162"/>
    </location>
    <ligand>
        <name>DNA</name>
        <dbReference type="ChEBI" id="CHEBI:16991"/>
    </ligand>
</feature>
<protein>
    <recommendedName>
        <fullName evidence="2">Formamidopyrimidine-DNA glycosylase</fullName>
        <shortName evidence="2">Fapy-DNA glycosylase</shortName>
        <ecNumber evidence="2">3.2.2.23</ecNumber>
    </recommendedName>
    <alternativeName>
        <fullName evidence="2">DNA-(apurinic or apyrimidinic site) lyase MutM</fullName>
        <shortName evidence="2">AP lyase MutM</shortName>
        <ecNumber evidence="2">4.2.99.18</ecNumber>
    </alternativeName>
</protein>
<reference key="1">
    <citation type="journal article" date="2004" name="Nature">
        <title>Genome sequence of Silicibacter pomeroyi reveals adaptations to the marine environment.</title>
        <authorList>
            <person name="Moran M.A."/>
            <person name="Buchan A."/>
            <person name="Gonzalez J.M."/>
            <person name="Heidelberg J.F."/>
            <person name="Whitman W.B."/>
            <person name="Kiene R.P."/>
            <person name="Henriksen J.R."/>
            <person name="King G.M."/>
            <person name="Belas R."/>
            <person name="Fuqua C."/>
            <person name="Brinkac L.M."/>
            <person name="Lewis M."/>
            <person name="Johri S."/>
            <person name="Weaver B."/>
            <person name="Pai G."/>
            <person name="Eisen J.A."/>
            <person name="Rahe E."/>
            <person name="Sheldon W.M."/>
            <person name="Ye W."/>
            <person name="Miller T.R."/>
            <person name="Carlton J."/>
            <person name="Rasko D.A."/>
            <person name="Paulsen I.T."/>
            <person name="Ren Q."/>
            <person name="Daugherty S.C."/>
            <person name="DeBoy R.T."/>
            <person name="Dodson R.J."/>
            <person name="Durkin A.S."/>
            <person name="Madupu R."/>
            <person name="Nelson W.C."/>
            <person name="Sullivan S.A."/>
            <person name="Rosovitz M.J."/>
            <person name="Haft D.H."/>
            <person name="Selengut J."/>
            <person name="Ward N."/>
        </authorList>
    </citation>
    <scope>NUCLEOTIDE SEQUENCE [LARGE SCALE GENOMIC DNA]</scope>
    <source>
        <strain>ATCC 700808 / DSM 15171 / DSS-3</strain>
    </source>
</reference>
<reference key="2">
    <citation type="journal article" date="2014" name="Stand. Genomic Sci.">
        <title>An updated genome annotation for the model marine bacterium Ruegeria pomeroyi DSS-3.</title>
        <authorList>
            <person name="Rivers A.R."/>
            <person name="Smith C.B."/>
            <person name="Moran M.A."/>
        </authorList>
    </citation>
    <scope>GENOME REANNOTATION</scope>
    <source>
        <strain>ATCC 700808 / DSM 15171 / DSS-3</strain>
    </source>
</reference>
<comment type="function">
    <text evidence="2">Involved in base excision repair of DNA damaged by oxidation or by mutagenic agents. Acts as a DNA glycosylase that recognizes and removes damaged bases. Has a preference for oxidized purines, such as 7,8-dihydro-8-oxoguanine (8-oxoG). Has AP (apurinic/apyrimidinic) lyase activity and introduces nicks in the DNA strand. Cleaves the DNA backbone by beta-delta elimination to generate a single-strand break at the site of the removed base with both 3'- and 5'-phosphates.</text>
</comment>
<comment type="catalytic activity">
    <reaction evidence="2">
        <text>Hydrolysis of DNA containing ring-opened 7-methylguanine residues, releasing 2,6-diamino-4-hydroxy-5-(N-methyl)formamidopyrimidine.</text>
        <dbReference type="EC" id="3.2.2.23"/>
    </reaction>
</comment>
<comment type="catalytic activity">
    <reaction evidence="2">
        <text>2'-deoxyribonucleotide-(2'-deoxyribose 5'-phosphate)-2'-deoxyribonucleotide-DNA = a 3'-end 2'-deoxyribonucleotide-(2,3-dehydro-2,3-deoxyribose 5'-phosphate)-DNA + a 5'-end 5'-phospho-2'-deoxyribonucleoside-DNA + H(+)</text>
        <dbReference type="Rhea" id="RHEA:66592"/>
        <dbReference type="Rhea" id="RHEA-COMP:13180"/>
        <dbReference type="Rhea" id="RHEA-COMP:16897"/>
        <dbReference type="Rhea" id="RHEA-COMP:17067"/>
        <dbReference type="ChEBI" id="CHEBI:15378"/>
        <dbReference type="ChEBI" id="CHEBI:136412"/>
        <dbReference type="ChEBI" id="CHEBI:157695"/>
        <dbReference type="ChEBI" id="CHEBI:167181"/>
        <dbReference type="EC" id="4.2.99.18"/>
    </reaction>
</comment>
<comment type="cofactor">
    <cofactor evidence="2">
        <name>Zn(2+)</name>
        <dbReference type="ChEBI" id="CHEBI:29105"/>
    </cofactor>
    <text evidence="2">Binds 1 zinc ion per subunit.</text>
</comment>
<comment type="subunit">
    <text evidence="2">Monomer.</text>
</comment>
<comment type="similarity">
    <text evidence="2">Belongs to the FPG family.</text>
</comment>
<proteinExistence type="inferred from homology"/>
<dbReference type="EC" id="3.2.2.23" evidence="2"/>
<dbReference type="EC" id="4.2.99.18" evidence="2"/>
<dbReference type="EMBL" id="CP000031">
    <property type="protein sequence ID" value="AAV93474.1"/>
    <property type="molecule type" value="Genomic_DNA"/>
</dbReference>
<dbReference type="RefSeq" id="WP_011045917.1">
    <property type="nucleotide sequence ID" value="NC_003911.12"/>
</dbReference>
<dbReference type="SMR" id="Q5LWT9"/>
<dbReference type="STRING" id="246200.SPO0146"/>
<dbReference type="PaxDb" id="246200-SPO0146"/>
<dbReference type="KEGG" id="sil:SPO0146"/>
<dbReference type="eggNOG" id="COG0266">
    <property type="taxonomic scope" value="Bacteria"/>
</dbReference>
<dbReference type="HOGENOM" id="CLU_038423_1_1_5"/>
<dbReference type="OrthoDB" id="9800855at2"/>
<dbReference type="Proteomes" id="UP000001023">
    <property type="component" value="Chromosome"/>
</dbReference>
<dbReference type="GO" id="GO:0034039">
    <property type="term" value="F:8-oxo-7,8-dihydroguanine DNA N-glycosylase activity"/>
    <property type="evidence" value="ECO:0007669"/>
    <property type="project" value="TreeGrafter"/>
</dbReference>
<dbReference type="GO" id="GO:0140078">
    <property type="term" value="F:class I DNA-(apurinic or apyrimidinic site) endonuclease activity"/>
    <property type="evidence" value="ECO:0007669"/>
    <property type="project" value="UniProtKB-EC"/>
</dbReference>
<dbReference type="GO" id="GO:0003684">
    <property type="term" value="F:damaged DNA binding"/>
    <property type="evidence" value="ECO:0007669"/>
    <property type="project" value="InterPro"/>
</dbReference>
<dbReference type="GO" id="GO:0008270">
    <property type="term" value="F:zinc ion binding"/>
    <property type="evidence" value="ECO:0007669"/>
    <property type="project" value="UniProtKB-UniRule"/>
</dbReference>
<dbReference type="GO" id="GO:0006284">
    <property type="term" value="P:base-excision repair"/>
    <property type="evidence" value="ECO:0007669"/>
    <property type="project" value="InterPro"/>
</dbReference>
<dbReference type="CDD" id="cd08966">
    <property type="entry name" value="EcFpg-like_N"/>
    <property type="match status" value="1"/>
</dbReference>
<dbReference type="FunFam" id="1.10.8.50:FF:000003">
    <property type="entry name" value="Formamidopyrimidine-DNA glycosylase"/>
    <property type="match status" value="1"/>
</dbReference>
<dbReference type="FunFam" id="3.20.190.10:FF:000001">
    <property type="entry name" value="Formamidopyrimidine-DNA glycosylase"/>
    <property type="match status" value="1"/>
</dbReference>
<dbReference type="Gene3D" id="1.10.8.50">
    <property type="match status" value="1"/>
</dbReference>
<dbReference type="Gene3D" id="3.20.190.10">
    <property type="entry name" value="MutM-like, N-terminal"/>
    <property type="match status" value="1"/>
</dbReference>
<dbReference type="HAMAP" id="MF_00103">
    <property type="entry name" value="Fapy_DNA_glycosyl"/>
    <property type="match status" value="1"/>
</dbReference>
<dbReference type="InterPro" id="IPR015886">
    <property type="entry name" value="DNA_glyclase/AP_lyase_DNA-bd"/>
</dbReference>
<dbReference type="InterPro" id="IPR020629">
    <property type="entry name" value="Formamido-pyr_DNA_Glyclase"/>
</dbReference>
<dbReference type="InterPro" id="IPR012319">
    <property type="entry name" value="FPG_cat"/>
</dbReference>
<dbReference type="InterPro" id="IPR035937">
    <property type="entry name" value="MutM-like_N-ter"/>
</dbReference>
<dbReference type="InterPro" id="IPR010979">
    <property type="entry name" value="Ribosomal_uS13-like_H2TH"/>
</dbReference>
<dbReference type="InterPro" id="IPR000214">
    <property type="entry name" value="Znf_DNA_glyclase/AP_lyase"/>
</dbReference>
<dbReference type="InterPro" id="IPR010663">
    <property type="entry name" value="Znf_FPG/IleRS"/>
</dbReference>
<dbReference type="NCBIfam" id="TIGR00577">
    <property type="entry name" value="fpg"/>
    <property type="match status" value="1"/>
</dbReference>
<dbReference type="NCBIfam" id="NF002211">
    <property type="entry name" value="PRK01103.1"/>
    <property type="match status" value="1"/>
</dbReference>
<dbReference type="PANTHER" id="PTHR22993">
    <property type="entry name" value="FORMAMIDOPYRIMIDINE-DNA GLYCOSYLASE"/>
    <property type="match status" value="1"/>
</dbReference>
<dbReference type="PANTHER" id="PTHR22993:SF9">
    <property type="entry name" value="FORMAMIDOPYRIMIDINE-DNA GLYCOSYLASE"/>
    <property type="match status" value="1"/>
</dbReference>
<dbReference type="Pfam" id="PF01149">
    <property type="entry name" value="Fapy_DNA_glyco"/>
    <property type="match status" value="1"/>
</dbReference>
<dbReference type="Pfam" id="PF06831">
    <property type="entry name" value="H2TH"/>
    <property type="match status" value="1"/>
</dbReference>
<dbReference type="Pfam" id="PF06827">
    <property type="entry name" value="zf-FPG_IleRS"/>
    <property type="match status" value="1"/>
</dbReference>
<dbReference type="SMART" id="SM00898">
    <property type="entry name" value="Fapy_DNA_glyco"/>
    <property type="match status" value="1"/>
</dbReference>
<dbReference type="SMART" id="SM01232">
    <property type="entry name" value="H2TH"/>
    <property type="match status" value="1"/>
</dbReference>
<dbReference type="SUPFAM" id="SSF57716">
    <property type="entry name" value="Glucocorticoid receptor-like (DNA-binding domain)"/>
    <property type="match status" value="1"/>
</dbReference>
<dbReference type="SUPFAM" id="SSF81624">
    <property type="entry name" value="N-terminal domain of MutM-like DNA repair proteins"/>
    <property type="match status" value="1"/>
</dbReference>
<dbReference type="SUPFAM" id="SSF46946">
    <property type="entry name" value="S13-like H2TH domain"/>
    <property type="match status" value="1"/>
</dbReference>
<dbReference type="PROSITE" id="PS51068">
    <property type="entry name" value="FPG_CAT"/>
    <property type="match status" value="1"/>
</dbReference>
<dbReference type="PROSITE" id="PS51066">
    <property type="entry name" value="ZF_FPG_2"/>
    <property type="match status" value="1"/>
</dbReference>
<organism>
    <name type="scientific">Ruegeria pomeroyi (strain ATCC 700808 / DSM 15171 / DSS-3)</name>
    <name type="common">Silicibacter pomeroyi</name>
    <dbReference type="NCBI Taxonomy" id="246200"/>
    <lineage>
        <taxon>Bacteria</taxon>
        <taxon>Pseudomonadati</taxon>
        <taxon>Pseudomonadota</taxon>
        <taxon>Alphaproteobacteria</taxon>
        <taxon>Rhodobacterales</taxon>
        <taxon>Roseobacteraceae</taxon>
        <taxon>Ruegeria</taxon>
    </lineage>
</organism>
<name>FPG_RUEPO</name>
<keyword id="KW-0227">DNA damage</keyword>
<keyword id="KW-0234">DNA repair</keyword>
<keyword id="KW-0238">DNA-binding</keyword>
<keyword id="KW-0326">Glycosidase</keyword>
<keyword id="KW-0378">Hydrolase</keyword>
<keyword id="KW-0456">Lyase</keyword>
<keyword id="KW-0479">Metal-binding</keyword>
<keyword id="KW-0511">Multifunctional enzyme</keyword>
<keyword id="KW-1185">Reference proteome</keyword>
<keyword id="KW-0862">Zinc</keyword>
<keyword id="KW-0863">Zinc-finger</keyword>